<reference key="1">
    <citation type="journal article" date="2002" name="Proc. Natl. Acad. Sci. U.S.A.">
        <title>Genome sequence of the hyperthermophilic crenarchaeon Pyrobaculum aerophilum.</title>
        <authorList>
            <person name="Fitz-Gibbon S.T."/>
            <person name="Ladner H."/>
            <person name="Kim U.-J."/>
            <person name="Stetter K.O."/>
            <person name="Simon M.I."/>
            <person name="Miller J.H."/>
        </authorList>
    </citation>
    <scope>NUCLEOTIDE SEQUENCE [LARGE SCALE GENOMIC DNA]</scope>
    <source>
        <strain>ATCC 51768 / DSM 7523 / JCM 9630 / CIP 104966 / NBRC 100827 / IM2</strain>
    </source>
</reference>
<protein>
    <recommendedName>
        <fullName evidence="1">Large ribosomal subunit protein uL6</fullName>
    </recommendedName>
    <alternativeName>
        <fullName evidence="2">50S ribosomal protein L6</fullName>
    </alternativeName>
</protein>
<keyword id="KW-1185">Reference proteome</keyword>
<keyword id="KW-0687">Ribonucleoprotein</keyword>
<keyword id="KW-0689">Ribosomal protein</keyword>
<keyword id="KW-0694">RNA-binding</keyword>
<keyword id="KW-0699">rRNA-binding</keyword>
<dbReference type="EMBL" id="AE009441">
    <property type="protein sequence ID" value="AAL64149.1"/>
    <property type="molecule type" value="Genomic_DNA"/>
</dbReference>
<dbReference type="RefSeq" id="WP_011008617.1">
    <property type="nucleotide sequence ID" value="NC_003364.1"/>
</dbReference>
<dbReference type="SMR" id="Q8ZVA7"/>
<dbReference type="FunCoup" id="Q8ZVA7">
    <property type="interactions" value="176"/>
</dbReference>
<dbReference type="STRING" id="178306.PAE2377"/>
<dbReference type="EnsemblBacteria" id="AAL64149">
    <property type="protein sequence ID" value="AAL64149"/>
    <property type="gene ID" value="PAE2377"/>
</dbReference>
<dbReference type="GeneID" id="1464485"/>
<dbReference type="KEGG" id="pai:PAE2377"/>
<dbReference type="PATRIC" id="fig|178306.9.peg.1773"/>
<dbReference type="eggNOG" id="arCOG04090">
    <property type="taxonomic scope" value="Archaea"/>
</dbReference>
<dbReference type="HOGENOM" id="CLU_065464_0_0_2"/>
<dbReference type="InParanoid" id="Q8ZVA7"/>
<dbReference type="Proteomes" id="UP000002439">
    <property type="component" value="Chromosome"/>
</dbReference>
<dbReference type="GO" id="GO:0022625">
    <property type="term" value="C:cytosolic large ribosomal subunit"/>
    <property type="evidence" value="ECO:0000318"/>
    <property type="project" value="GO_Central"/>
</dbReference>
<dbReference type="GO" id="GO:0019843">
    <property type="term" value="F:rRNA binding"/>
    <property type="evidence" value="ECO:0007669"/>
    <property type="project" value="UniProtKB-UniRule"/>
</dbReference>
<dbReference type="GO" id="GO:0003735">
    <property type="term" value="F:structural constituent of ribosome"/>
    <property type="evidence" value="ECO:0000318"/>
    <property type="project" value="GO_Central"/>
</dbReference>
<dbReference type="GO" id="GO:0002181">
    <property type="term" value="P:cytoplasmic translation"/>
    <property type="evidence" value="ECO:0000318"/>
    <property type="project" value="GO_Central"/>
</dbReference>
<dbReference type="FunFam" id="3.90.930.12:FF:000008">
    <property type="entry name" value="50S ribosomal protein L6"/>
    <property type="match status" value="1"/>
</dbReference>
<dbReference type="Gene3D" id="3.90.930.12">
    <property type="entry name" value="Ribosomal protein L6, alpha-beta domain"/>
    <property type="match status" value="2"/>
</dbReference>
<dbReference type="HAMAP" id="MF_01365_A">
    <property type="entry name" value="Ribosomal_uL6_A"/>
    <property type="match status" value="1"/>
</dbReference>
<dbReference type="InterPro" id="IPR000702">
    <property type="entry name" value="Ribosomal_uL6-like"/>
</dbReference>
<dbReference type="InterPro" id="IPR036789">
    <property type="entry name" value="Ribosomal_uL6-like_a/b-dom_sf"/>
</dbReference>
<dbReference type="InterPro" id="IPR020040">
    <property type="entry name" value="Ribosomal_uL6_a/b-dom"/>
</dbReference>
<dbReference type="InterPro" id="IPR019907">
    <property type="entry name" value="Ribosomal_uL6_arc"/>
</dbReference>
<dbReference type="NCBIfam" id="NF004037">
    <property type="entry name" value="PRK05518.1"/>
    <property type="match status" value="1"/>
</dbReference>
<dbReference type="NCBIfam" id="TIGR03653">
    <property type="entry name" value="uL6_arch"/>
    <property type="match status" value="1"/>
</dbReference>
<dbReference type="PANTHER" id="PTHR11655:SF16">
    <property type="entry name" value="60S RIBOSOMAL PROTEIN L9"/>
    <property type="match status" value="1"/>
</dbReference>
<dbReference type="PANTHER" id="PTHR11655">
    <property type="entry name" value="60S/50S RIBOSOMAL PROTEIN L6/L9"/>
    <property type="match status" value="1"/>
</dbReference>
<dbReference type="Pfam" id="PF00347">
    <property type="entry name" value="Ribosomal_L6"/>
    <property type="match status" value="2"/>
</dbReference>
<dbReference type="PIRSF" id="PIRSF002162">
    <property type="entry name" value="Ribosomal_L6"/>
    <property type="match status" value="1"/>
</dbReference>
<dbReference type="SUPFAM" id="SSF56053">
    <property type="entry name" value="Ribosomal protein L6"/>
    <property type="match status" value="2"/>
</dbReference>
<evidence type="ECO:0000255" key="1">
    <source>
        <dbReference type="HAMAP-Rule" id="MF_01365"/>
    </source>
</evidence>
<evidence type="ECO:0000305" key="2"/>
<comment type="function">
    <text evidence="1">This protein binds to the 23S rRNA, and is important in its secondary structure. It is located near the subunit interface in the base of the L7/L12 stalk, and near the tRNA binding site of the peptidyltransferase center.</text>
</comment>
<comment type="subunit">
    <text evidence="1">Part of the 50S ribosomal subunit.</text>
</comment>
<comment type="similarity">
    <text evidence="1">Belongs to the universal ribosomal protein uL6 family.</text>
</comment>
<feature type="chain" id="PRO_0000260995" description="Large ribosomal subunit protein uL6">
    <location>
        <begin position="1"/>
        <end position="196"/>
    </location>
</feature>
<organism>
    <name type="scientific">Pyrobaculum aerophilum (strain ATCC 51768 / DSM 7523 / JCM 9630 / CIP 104966 / NBRC 100827 / IM2)</name>
    <dbReference type="NCBI Taxonomy" id="178306"/>
    <lineage>
        <taxon>Archaea</taxon>
        <taxon>Thermoproteota</taxon>
        <taxon>Thermoprotei</taxon>
        <taxon>Thermoproteales</taxon>
        <taxon>Thermoproteaceae</taxon>
        <taxon>Pyrobaculum</taxon>
    </lineage>
</organism>
<name>RL6_PYRAE</name>
<proteinExistence type="inferred from homology"/>
<accession>Q8ZVA7</accession>
<gene>
    <name evidence="1" type="primary">rpl6</name>
    <name type="ordered locus">PAE2377</name>
</gene>
<sequence>MRVVYSVEEVEIPKGVSVSIERTGPFDYIVKVKGPLGEVTKEFKNTPVVMSLQDGKIVMEVFKARKREYAILGTYKGILKNMFLGVTRGWRYKLKVIYTHFPMLVKVQGNQLVIENFLGRKSKITLNIPKGVKVEVKGKEDIVIEGIDRELVSTFAAAVQAATELHGDERPSPHGREGGLGVVDGIYVVGYEHIKS</sequence>